<feature type="chain" id="PRO_1000166387" description="Large ribosomal subunit protein uL16">
    <location>
        <begin position="1"/>
        <end position="146"/>
    </location>
</feature>
<name>RL16_THERP</name>
<sequence length="146" mass="16629">MLMPRRVQHRKQHRYRTKGIAWRGSTLAFGDYGIQALEPAWVTAQQIEAARRAITNAVRRGGKVWIRVFPDKPVTKKPAETRMGSGKGNPEYWMDVVKPGRILFELAGVREELALEALTRAIHKLPCRCRIVKRERPGEAAEEEAS</sequence>
<proteinExistence type="inferred from homology"/>
<organism>
    <name type="scientific">Thermomicrobium roseum (strain ATCC 27502 / DSM 5159 / P-2)</name>
    <dbReference type="NCBI Taxonomy" id="309801"/>
    <lineage>
        <taxon>Bacteria</taxon>
        <taxon>Pseudomonadati</taxon>
        <taxon>Thermomicrobiota</taxon>
        <taxon>Thermomicrobia</taxon>
        <taxon>Thermomicrobiales</taxon>
        <taxon>Thermomicrobiaceae</taxon>
        <taxon>Thermomicrobium</taxon>
    </lineage>
</organism>
<keyword id="KW-1185">Reference proteome</keyword>
<keyword id="KW-0687">Ribonucleoprotein</keyword>
<keyword id="KW-0689">Ribosomal protein</keyword>
<keyword id="KW-0694">RNA-binding</keyword>
<keyword id="KW-0699">rRNA-binding</keyword>
<keyword id="KW-0820">tRNA-binding</keyword>
<protein>
    <recommendedName>
        <fullName evidence="1">Large ribosomal subunit protein uL16</fullName>
    </recommendedName>
    <alternativeName>
        <fullName evidence="2">50S ribosomal protein L16</fullName>
    </alternativeName>
</protein>
<accession>B9KZY0</accession>
<comment type="function">
    <text evidence="1">Binds 23S rRNA and is also seen to make contacts with the A and possibly P site tRNAs.</text>
</comment>
<comment type="subunit">
    <text evidence="1">Part of the 50S ribosomal subunit.</text>
</comment>
<comment type="similarity">
    <text evidence="1">Belongs to the universal ribosomal protein uL16 family.</text>
</comment>
<reference key="1">
    <citation type="journal article" date="2009" name="PLoS ONE">
        <title>Complete genome sequence of the aerobic CO-oxidizing thermophile Thermomicrobium roseum.</title>
        <authorList>
            <person name="Wu D."/>
            <person name="Raymond J."/>
            <person name="Wu M."/>
            <person name="Chatterji S."/>
            <person name="Ren Q."/>
            <person name="Graham J.E."/>
            <person name="Bryant D.A."/>
            <person name="Robb F."/>
            <person name="Colman A."/>
            <person name="Tallon L.J."/>
            <person name="Badger J.H."/>
            <person name="Madupu R."/>
            <person name="Ward N.L."/>
            <person name="Eisen J.A."/>
        </authorList>
    </citation>
    <scope>NUCLEOTIDE SEQUENCE [LARGE SCALE GENOMIC DNA]</scope>
    <source>
        <strain>ATCC 27502 / DSM 5159 / P-2</strain>
    </source>
</reference>
<dbReference type="EMBL" id="CP001275">
    <property type="protein sequence ID" value="ACM04492.1"/>
    <property type="molecule type" value="Genomic_DNA"/>
</dbReference>
<dbReference type="RefSeq" id="WP_015921941.1">
    <property type="nucleotide sequence ID" value="NC_011959.1"/>
</dbReference>
<dbReference type="SMR" id="B9KZY0"/>
<dbReference type="STRING" id="309801.trd_0977"/>
<dbReference type="KEGG" id="tro:trd_0977"/>
<dbReference type="eggNOG" id="COG0197">
    <property type="taxonomic scope" value="Bacteria"/>
</dbReference>
<dbReference type="HOGENOM" id="CLU_078858_2_1_0"/>
<dbReference type="OrthoDB" id="9802589at2"/>
<dbReference type="Proteomes" id="UP000000447">
    <property type="component" value="Chromosome"/>
</dbReference>
<dbReference type="GO" id="GO:0022625">
    <property type="term" value="C:cytosolic large ribosomal subunit"/>
    <property type="evidence" value="ECO:0007669"/>
    <property type="project" value="TreeGrafter"/>
</dbReference>
<dbReference type="GO" id="GO:0019843">
    <property type="term" value="F:rRNA binding"/>
    <property type="evidence" value="ECO:0007669"/>
    <property type="project" value="UniProtKB-UniRule"/>
</dbReference>
<dbReference type="GO" id="GO:0003735">
    <property type="term" value="F:structural constituent of ribosome"/>
    <property type="evidence" value="ECO:0007669"/>
    <property type="project" value="InterPro"/>
</dbReference>
<dbReference type="GO" id="GO:0000049">
    <property type="term" value="F:tRNA binding"/>
    <property type="evidence" value="ECO:0007669"/>
    <property type="project" value="UniProtKB-KW"/>
</dbReference>
<dbReference type="GO" id="GO:0006412">
    <property type="term" value="P:translation"/>
    <property type="evidence" value="ECO:0007669"/>
    <property type="project" value="UniProtKB-UniRule"/>
</dbReference>
<dbReference type="CDD" id="cd01433">
    <property type="entry name" value="Ribosomal_L16_L10e"/>
    <property type="match status" value="1"/>
</dbReference>
<dbReference type="FunFam" id="3.90.1170.10:FF:000001">
    <property type="entry name" value="50S ribosomal protein L16"/>
    <property type="match status" value="1"/>
</dbReference>
<dbReference type="Gene3D" id="3.90.1170.10">
    <property type="entry name" value="Ribosomal protein L10e/L16"/>
    <property type="match status" value="1"/>
</dbReference>
<dbReference type="HAMAP" id="MF_01342">
    <property type="entry name" value="Ribosomal_uL16"/>
    <property type="match status" value="1"/>
</dbReference>
<dbReference type="InterPro" id="IPR047873">
    <property type="entry name" value="Ribosomal_uL16"/>
</dbReference>
<dbReference type="InterPro" id="IPR000114">
    <property type="entry name" value="Ribosomal_uL16_bact-type"/>
</dbReference>
<dbReference type="InterPro" id="IPR020798">
    <property type="entry name" value="Ribosomal_uL16_CS"/>
</dbReference>
<dbReference type="InterPro" id="IPR016180">
    <property type="entry name" value="Ribosomal_uL16_dom"/>
</dbReference>
<dbReference type="InterPro" id="IPR036920">
    <property type="entry name" value="Ribosomal_uL16_sf"/>
</dbReference>
<dbReference type="NCBIfam" id="TIGR01164">
    <property type="entry name" value="rplP_bact"/>
    <property type="match status" value="1"/>
</dbReference>
<dbReference type="PANTHER" id="PTHR12220">
    <property type="entry name" value="50S/60S RIBOSOMAL PROTEIN L16"/>
    <property type="match status" value="1"/>
</dbReference>
<dbReference type="PANTHER" id="PTHR12220:SF13">
    <property type="entry name" value="LARGE RIBOSOMAL SUBUNIT PROTEIN UL16M"/>
    <property type="match status" value="1"/>
</dbReference>
<dbReference type="Pfam" id="PF00252">
    <property type="entry name" value="Ribosomal_L16"/>
    <property type="match status" value="1"/>
</dbReference>
<dbReference type="PRINTS" id="PR00060">
    <property type="entry name" value="RIBOSOMALL16"/>
</dbReference>
<dbReference type="SUPFAM" id="SSF54686">
    <property type="entry name" value="Ribosomal protein L16p/L10e"/>
    <property type="match status" value="1"/>
</dbReference>
<dbReference type="PROSITE" id="PS00586">
    <property type="entry name" value="RIBOSOMAL_L16_1"/>
    <property type="match status" value="1"/>
</dbReference>
<dbReference type="PROSITE" id="PS00701">
    <property type="entry name" value="RIBOSOMAL_L16_2"/>
    <property type="match status" value="1"/>
</dbReference>
<evidence type="ECO:0000255" key="1">
    <source>
        <dbReference type="HAMAP-Rule" id="MF_01342"/>
    </source>
</evidence>
<evidence type="ECO:0000305" key="2"/>
<gene>
    <name evidence="1" type="primary">rplP</name>
    <name type="ordered locus">trd_0977</name>
</gene>